<comment type="function">
    <text evidence="2">Very long-chain specific acyl-CoA dehydrogenase is one of the acyl-CoA dehydrogenases that catalyze the first step of mitochondrial fatty acid beta-oxidation, an aerobic process breaking down fatty acids into acetyl-CoA and allowing the production of energy from fats. The first step of fatty acid beta-oxidation consists in the removal of one hydrogen from C-2 and C-3 of the straight-chain fatty acyl-CoA thioester, resulting in the formation of trans-2-enoyl-CoA. Among the different mitochondrial acyl-CoA dehydrogenases, very long-chain specific acyl-CoA dehydrogenase acts specifically on acyl-CoAs with saturated 12 to 24 carbons long primary chains.</text>
</comment>
<comment type="catalytic activity">
    <reaction evidence="2">
        <text>a very-long-chain 2,3-saturated fatty acyl-CoA + oxidized [electron-transfer flavoprotein] + H(+) = a very-long-chain (2E)-enoyl-CoA + reduced [electron-transfer flavoprotein]</text>
        <dbReference type="Rhea" id="RHEA:19181"/>
        <dbReference type="Rhea" id="RHEA-COMP:10685"/>
        <dbReference type="Rhea" id="RHEA-COMP:10686"/>
        <dbReference type="ChEBI" id="CHEBI:15378"/>
        <dbReference type="ChEBI" id="CHEBI:57692"/>
        <dbReference type="ChEBI" id="CHEBI:58307"/>
        <dbReference type="ChEBI" id="CHEBI:83724"/>
        <dbReference type="ChEBI" id="CHEBI:83728"/>
        <dbReference type="EC" id="1.3.8.9"/>
    </reaction>
    <physiologicalReaction direction="left-to-right" evidence="2">
        <dbReference type="Rhea" id="RHEA:19182"/>
    </physiologicalReaction>
</comment>
<comment type="catalytic activity">
    <reaction evidence="2">
        <text>dodecanoyl-CoA + oxidized [electron-transfer flavoprotein] + H(+) = (2E)-dodecenoyl-CoA + reduced [electron-transfer flavoprotein]</text>
        <dbReference type="Rhea" id="RHEA:47296"/>
        <dbReference type="Rhea" id="RHEA-COMP:10685"/>
        <dbReference type="Rhea" id="RHEA-COMP:10686"/>
        <dbReference type="ChEBI" id="CHEBI:15378"/>
        <dbReference type="ChEBI" id="CHEBI:57330"/>
        <dbReference type="ChEBI" id="CHEBI:57375"/>
        <dbReference type="ChEBI" id="CHEBI:57692"/>
        <dbReference type="ChEBI" id="CHEBI:58307"/>
    </reaction>
    <physiologicalReaction direction="left-to-right" evidence="2">
        <dbReference type="Rhea" id="RHEA:47297"/>
    </physiologicalReaction>
</comment>
<comment type="catalytic activity">
    <reaction evidence="2">
        <text>tetradecanoyl-CoA + oxidized [electron-transfer flavoprotein] + H(+) = (2E)-tetradecenoyl-CoA + reduced [electron-transfer flavoprotein]</text>
        <dbReference type="Rhea" id="RHEA:47316"/>
        <dbReference type="Rhea" id="RHEA-COMP:10685"/>
        <dbReference type="Rhea" id="RHEA-COMP:10686"/>
        <dbReference type="ChEBI" id="CHEBI:15378"/>
        <dbReference type="ChEBI" id="CHEBI:57385"/>
        <dbReference type="ChEBI" id="CHEBI:57692"/>
        <dbReference type="ChEBI" id="CHEBI:58307"/>
        <dbReference type="ChEBI" id="CHEBI:61405"/>
    </reaction>
    <physiologicalReaction direction="left-to-right" evidence="2">
        <dbReference type="Rhea" id="RHEA:47317"/>
    </physiologicalReaction>
</comment>
<comment type="catalytic activity">
    <reaction evidence="2">
        <text>oxidized [electron-transfer flavoprotein] + hexadecanoyl-CoA + H(+) = (2E)-hexadecenoyl-CoA + reduced [electron-transfer flavoprotein]</text>
        <dbReference type="Rhea" id="RHEA:43448"/>
        <dbReference type="Rhea" id="RHEA-COMP:10685"/>
        <dbReference type="Rhea" id="RHEA-COMP:10686"/>
        <dbReference type="ChEBI" id="CHEBI:15378"/>
        <dbReference type="ChEBI" id="CHEBI:57379"/>
        <dbReference type="ChEBI" id="CHEBI:57692"/>
        <dbReference type="ChEBI" id="CHEBI:58307"/>
        <dbReference type="ChEBI" id="CHEBI:61526"/>
    </reaction>
    <physiologicalReaction direction="left-to-right" evidence="2">
        <dbReference type="Rhea" id="RHEA:43449"/>
    </physiologicalReaction>
</comment>
<comment type="catalytic activity">
    <reaction evidence="2">
        <text>octadecanoyl-CoA + oxidized [electron-transfer flavoprotein] + H(+) = (2E)-octadecenoyl-CoA + reduced [electron-transfer flavoprotein]</text>
        <dbReference type="Rhea" id="RHEA:47240"/>
        <dbReference type="Rhea" id="RHEA-COMP:10685"/>
        <dbReference type="Rhea" id="RHEA-COMP:10686"/>
        <dbReference type="ChEBI" id="CHEBI:15378"/>
        <dbReference type="ChEBI" id="CHEBI:57394"/>
        <dbReference type="ChEBI" id="CHEBI:57692"/>
        <dbReference type="ChEBI" id="CHEBI:58307"/>
        <dbReference type="ChEBI" id="CHEBI:71412"/>
    </reaction>
    <physiologicalReaction direction="left-to-right" evidence="2">
        <dbReference type="Rhea" id="RHEA:47241"/>
    </physiologicalReaction>
</comment>
<comment type="catalytic activity">
    <reaction evidence="2">
        <text>eicosanoyl-CoA + oxidized [electron-transfer flavoprotein] + H(+) = (2E)-eicosenoyl-CoA + reduced [electron-transfer flavoprotein]</text>
        <dbReference type="Rhea" id="RHEA:47236"/>
        <dbReference type="Rhea" id="RHEA-COMP:10685"/>
        <dbReference type="Rhea" id="RHEA-COMP:10686"/>
        <dbReference type="ChEBI" id="CHEBI:15378"/>
        <dbReference type="ChEBI" id="CHEBI:57380"/>
        <dbReference type="ChEBI" id="CHEBI:57692"/>
        <dbReference type="ChEBI" id="CHEBI:58307"/>
        <dbReference type="ChEBI" id="CHEBI:74691"/>
    </reaction>
    <physiologicalReaction direction="left-to-right" evidence="2">
        <dbReference type="Rhea" id="RHEA:47237"/>
    </physiologicalReaction>
</comment>
<comment type="catalytic activity">
    <reaction evidence="2">
        <text>docosanoyl-CoA + oxidized [electron-transfer flavoprotein] + H(+) = (2E)-docosenoyl-CoA + reduced [electron-transfer flavoprotein]</text>
        <dbReference type="Rhea" id="RHEA:47228"/>
        <dbReference type="Rhea" id="RHEA-COMP:10685"/>
        <dbReference type="Rhea" id="RHEA-COMP:10686"/>
        <dbReference type="ChEBI" id="CHEBI:15378"/>
        <dbReference type="ChEBI" id="CHEBI:57692"/>
        <dbReference type="ChEBI" id="CHEBI:58307"/>
        <dbReference type="ChEBI" id="CHEBI:65059"/>
        <dbReference type="ChEBI" id="CHEBI:74692"/>
    </reaction>
    <physiologicalReaction direction="left-to-right" evidence="2">
        <dbReference type="Rhea" id="RHEA:47229"/>
    </physiologicalReaction>
</comment>
<comment type="catalytic activity">
    <reaction evidence="2">
        <text>tetracosanoyl-CoA + oxidized [electron-transfer flavoprotein] + H(+) = (2E)-tetracosenoyl-CoA + reduced [electron-transfer flavoprotein]</text>
        <dbReference type="Rhea" id="RHEA:47232"/>
        <dbReference type="Rhea" id="RHEA-COMP:10685"/>
        <dbReference type="Rhea" id="RHEA-COMP:10686"/>
        <dbReference type="ChEBI" id="CHEBI:15378"/>
        <dbReference type="ChEBI" id="CHEBI:57692"/>
        <dbReference type="ChEBI" id="CHEBI:58307"/>
        <dbReference type="ChEBI" id="CHEBI:65052"/>
        <dbReference type="ChEBI" id="CHEBI:74693"/>
    </reaction>
    <physiologicalReaction direction="left-to-right" evidence="2">
        <dbReference type="Rhea" id="RHEA:47233"/>
    </physiologicalReaction>
</comment>
<comment type="cofactor">
    <cofactor evidence="2">
        <name>FAD</name>
        <dbReference type="ChEBI" id="CHEBI:57692"/>
    </cofactor>
</comment>
<comment type="pathway">
    <text evidence="2">Lipid metabolism; mitochondrial fatty acid beta-oxidation.</text>
</comment>
<comment type="subunit">
    <text evidence="2">Homodimer. Homodimerizes after import into the mitochondrion.</text>
</comment>
<comment type="subcellular location">
    <subcellularLocation>
        <location evidence="2">Mitochondrion inner membrane</location>
        <topology evidence="2">Peripheral membrane protein</topology>
    </subcellularLocation>
</comment>
<comment type="PTM">
    <text evidence="3">S-nitrosylation at Cys-237 in liver improves catalytic efficiency.</text>
</comment>
<comment type="similarity">
    <text evidence="4">Belongs to the acyl-CoA dehydrogenase family.</text>
</comment>
<organism>
    <name type="scientific">Macaca fascicularis</name>
    <name type="common">Crab-eating macaque</name>
    <name type="synonym">Cynomolgus monkey</name>
    <dbReference type="NCBI Taxonomy" id="9541"/>
    <lineage>
        <taxon>Eukaryota</taxon>
        <taxon>Metazoa</taxon>
        <taxon>Chordata</taxon>
        <taxon>Craniata</taxon>
        <taxon>Vertebrata</taxon>
        <taxon>Euteleostomi</taxon>
        <taxon>Mammalia</taxon>
        <taxon>Eutheria</taxon>
        <taxon>Euarchontoglires</taxon>
        <taxon>Primates</taxon>
        <taxon>Haplorrhini</taxon>
        <taxon>Catarrhini</taxon>
        <taxon>Cercopithecidae</taxon>
        <taxon>Cercopithecinae</taxon>
        <taxon>Macaca</taxon>
    </lineage>
</organism>
<name>ACADV_MACFA</name>
<reference key="1">
    <citation type="submission" date="2002-04" db="EMBL/GenBank/DDBJ databases">
        <title>Isolation and characterization of cDNA for macaque neurological disease genes.</title>
        <authorList>
            <person name="Kusuda J."/>
            <person name="Osada N."/>
            <person name="Hida M."/>
            <person name="Sugano S."/>
            <person name="Hashimoto K."/>
        </authorList>
    </citation>
    <scope>NUCLEOTIDE SEQUENCE [LARGE SCALE MRNA]</scope>
    <source>
        <tissue>Brain cortex</tissue>
    </source>
</reference>
<keyword id="KW-0007">Acetylation</keyword>
<keyword id="KW-0274">FAD</keyword>
<keyword id="KW-0276">Fatty acid metabolism</keyword>
<keyword id="KW-0285">Flavoprotein</keyword>
<keyword id="KW-0443">Lipid metabolism</keyword>
<keyword id="KW-0472">Membrane</keyword>
<keyword id="KW-0496">Mitochondrion</keyword>
<keyword id="KW-0999">Mitochondrion inner membrane</keyword>
<keyword id="KW-0560">Oxidoreductase</keyword>
<keyword id="KW-0597">Phosphoprotein</keyword>
<keyword id="KW-1185">Reference proteome</keyword>
<keyword id="KW-0702">S-nitrosylation</keyword>
<keyword id="KW-0809">Transit peptide</keyword>
<proteinExistence type="evidence at transcript level"/>
<gene>
    <name evidence="2" type="primary">ACADVL</name>
    <name type="synonym">VLCAD</name>
    <name type="ORF">QccE-11706</name>
</gene>
<accession>Q8HXY7</accession>
<sequence>MQAARIAPSLGRQLLRFGGGSSRPTALLGQPWPGPARRPYAGGAAQLALDKSDSHLSDALNKAKPAKAESKSFAVAMFKGQLTTDQVFPYPSVLNQEQTEFLKELVEPVSRFFEEVNDPAKNDTLEMVEETTLQGLKELGAFGLQVPSELGGVGLCNTQYARLVEIVGMHDLAVGITLGAHQSIGFKGILLFGTKAQKEKYLPKLASGETLAAFCLTEPSSGSDAASIRTSAVPSPCGKYYTLNGSKLWISNGGLADIFTVFAKTPVTDPATGAVKEKITAFVVERGFGGVTHGPPEKKMGIKASNTAEVLFDGVRVPSENVLGEVGSGFKVAMHILNNGRFGMAAALAGTMRGIITKAVDYATNRIQFGEKIHNFGLIQEKLARMVMLQYVTESMAYMVSANMDQGSTDFQIEAAISKIFGSEAAWKVTDECIQIMGGMGFMKEPGVERVLRDLRIFRIFEGTNDILRLFVALQGCMDKGKELSGLGSALKNPFGNAGLLLGEAGKQLRRRAGLGSGLSLSGIVHPELSRSGELAVQALEQFATVVEAKLIKHKKGIVNEQFLLQRLADGAIDLYAMVVVLSRASRSLSEGHHTAQHEKMLCDTWCIEAAARIREGMAALQSDPRQHELYRNFKSISKALVERGGVVTNNPLGF</sequence>
<dbReference type="EC" id="1.3.8.9" evidence="2"/>
<dbReference type="EMBL" id="AB083302">
    <property type="protein sequence ID" value="BAC20581.1"/>
    <property type="molecule type" value="mRNA"/>
</dbReference>
<dbReference type="SMR" id="Q8HXY7"/>
<dbReference type="STRING" id="9541.ENSMFAP00000002034"/>
<dbReference type="UniPathway" id="UPA00660"/>
<dbReference type="Proteomes" id="UP000233100">
    <property type="component" value="Unplaced"/>
</dbReference>
<dbReference type="GO" id="GO:0005743">
    <property type="term" value="C:mitochondrial inner membrane"/>
    <property type="evidence" value="ECO:0007669"/>
    <property type="project" value="UniProtKB-SubCell"/>
</dbReference>
<dbReference type="GO" id="GO:0003995">
    <property type="term" value="F:acyl-CoA dehydrogenase activity"/>
    <property type="evidence" value="ECO:0000250"/>
    <property type="project" value="UniProtKB"/>
</dbReference>
<dbReference type="GO" id="GO:0000062">
    <property type="term" value="F:fatty-acyl-CoA binding"/>
    <property type="evidence" value="ECO:0007669"/>
    <property type="project" value="TreeGrafter"/>
</dbReference>
<dbReference type="GO" id="GO:0050660">
    <property type="term" value="F:flavin adenine dinucleotide binding"/>
    <property type="evidence" value="ECO:0000250"/>
    <property type="project" value="UniProtKB"/>
</dbReference>
<dbReference type="GO" id="GO:0042802">
    <property type="term" value="F:identical protein binding"/>
    <property type="evidence" value="ECO:0000250"/>
    <property type="project" value="UniProtKB"/>
</dbReference>
<dbReference type="GO" id="GO:0017099">
    <property type="term" value="F:very-long-chain fatty acyl-CoA dehydrogenase activity"/>
    <property type="evidence" value="ECO:0000250"/>
    <property type="project" value="UniProtKB"/>
</dbReference>
<dbReference type="GO" id="GO:0033539">
    <property type="term" value="P:fatty acid beta-oxidation using acyl-CoA dehydrogenase"/>
    <property type="evidence" value="ECO:0000250"/>
    <property type="project" value="UniProtKB"/>
</dbReference>
<dbReference type="CDD" id="cd01161">
    <property type="entry name" value="VLCAD"/>
    <property type="match status" value="1"/>
</dbReference>
<dbReference type="FunFam" id="1.20.140.10:FF:000008">
    <property type="entry name" value="acyl-CoA dehydrogenase family member 9, mitochondrial"/>
    <property type="match status" value="1"/>
</dbReference>
<dbReference type="FunFam" id="1.20.140.10:FF:000017">
    <property type="entry name" value="very long-chain specific acyl-CoA dehydrogenase, mitochondrial"/>
    <property type="match status" value="1"/>
</dbReference>
<dbReference type="FunFam" id="2.40.110.10:FF:000006">
    <property type="entry name" value="very long-chain specific acyl-CoA dehydrogenase, mitochondrial"/>
    <property type="match status" value="1"/>
</dbReference>
<dbReference type="FunFam" id="1.10.540.10:FF:000001">
    <property type="entry name" value="Very long-chain-specific acyl-CoA dehydrogenase, mitochondrial"/>
    <property type="match status" value="1"/>
</dbReference>
<dbReference type="Gene3D" id="1.10.540.10">
    <property type="entry name" value="Acyl-CoA dehydrogenase/oxidase, N-terminal domain"/>
    <property type="match status" value="1"/>
</dbReference>
<dbReference type="Gene3D" id="2.40.110.10">
    <property type="entry name" value="Butyryl-CoA Dehydrogenase, subunit A, domain 2"/>
    <property type="match status" value="1"/>
</dbReference>
<dbReference type="Gene3D" id="1.20.140.10">
    <property type="entry name" value="Butyryl-CoA Dehydrogenase, subunit A, domain 3"/>
    <property type="match status" value="2"/>
</dbReference>
<dbReference type="InterPro" id="IPR049448">
    <property type="entry name" value="ACAD9/ACADV-like_C"/>
</dbReference>
<dbReference type="InterPro" id="IPR006089">
    <property type="entry name" value="Acyl-CoA_DH_CS"/>
</dbReference>
<dbReference type="InterPro" id="IPR006091">
    <property type="entry name" value="Acyl-CoA_Oxase/DH_mid-dom"/>
</dbReference>
<dbReference type="InterPro" id="IPR046373">
    <property type="entry name" value="Acyl-CoA_Oxase/DH_mid-dom_sf"/>
</dbReference>
<dbReference type="InterPro" id="IPR036250">
    <property type="entry name" value="AcylCo_DH-like_C"/>
</dbReference>
<dbReference type="InterPro" id="IPR009075">
    <property type="entry name" value="AcylCo_DH/oxidase_C"/>
</dbReference>
<dbReference type="InterPro" id="IPR013786">
    <property type="entry name" value="AcylCoA_DH/ox_N"/>
</dbReference>
<dbReference type="InterPro" id="IPR037069">
    <property type="entry name" value="AcylCoA_DH/ox_N_sf"/>
</dbReference>
<dbReference type="InterPro" id="IPR009100">
    <property type="entry name" value="AcylCoA_DH/oxidase_NM_dom_sf"/>
</dbReference>
<dbReference type="PANTHER" id="PTHR43884">
    <property type="entry name" value="ACYL-COA DEHYDROGENASE"/>
    <property type="match status" value="1"/>
</dbReference>
<dbReference type="PANTHER" id="PTHR43884:SF11">
    <property type="entry name" value="VERY LONG-CHAIN SPECIFIC ACYL-COA DEHYDROGENASE, MITOCHONDRIAL"/>
    <property type="match status" value="1"/>
</dbReference>
<dbReference type="Pfam" id="PF21343">
    <property type="entry name" value="ACAD9-ACADV_C"/>
    <property type="match status" value="1"/>
</dbReference>
<dbReference type="Pfam" id="PF00441">
    <property type="entry name" value="Acyl-CoA_dh_1"/>
    <property type="match status" value="1"/>
</dbReference>
<dbReference type="Pfam" id="PF02770">
    <property type="entry name" value="Acyl-CoA_dh_M"/>
    <property type="match status" value="1"/>
</dbReference>
<dbReference type="Pfam" id="PF02771">
    <property type="entry name" value="Acyl-CoA_dh_N"/>
    <property type="match status" value="1"/>
</dbReference>
<dbReference type="SUPFAM" id="SSF47203">
    <property type="entry name" value="Acyl-CoA dehydrogenase C-terminal domain-like"/>
    <property type="match status" value="1"/>
</dbReference>
<dbReference type="SUPFAM" id="SSF56645">
    <property type="entry name" value="Acyl-CoA dehydrogenase NM domain-like"/>
    <property type="match status" value="1"/>
</dbReference>
<dbReference type="PROSITE" id="PS00072">
    <property type="entry name" value="ACYL_COA_DH_1"/>
    <property type="match status" value="1"/>
</dbReference>
<dbReference type="PROSITE" id="PS00073">
    <property type="entry name" value="ACYL_COA_DH_2"/>
    <property type="match status" value="1"/>
</dbReference>
<protein>
    <recommendedName>
        <fullName evidence="4">Very long-chain specific acyl-CoA dehydrogenase, mitochondrial</fullName>
        <shortName evidence="4">VLCAD</shortName>
        <ecNumber evidence="2">1.3.8.9</ecNumber>
    </recommendedName>
</protein>
<evidence type="ECO:0000250" key="1"/>
<evidence type="ECO:0000250" key="2">
    <source>
        <dbReference type="UniProtKB" id="P49748"/>
    </source>
</evidence>
<evidence type="ECO:0000250" key="3">
    <source>
        <dbReference type="UniProtKB" id="P50544"/>
    </source>
</evidence>
<evidence type="ECO:0000305" key="4"/>
<feature type="transit peptide" description="Mitochondrion" evidence="1">
    <location>
        <begin position="1"/>
        <end position="40"/>
    </location>
</feature>
<feature type="chain" id="PRO_0000000516" description="Very long-chain specific acyl-CoA dehydrogenase, mitochondrial">
    <location>
        <begin position="41"/>
        <end position="655"/>
    </location>
</feature>
<feature type="region of interest" description="Catalytic" evidence="2">
    <location>
        <begin position="41"/>
        <end position="482"/>
    </location>
</feature>
<feature type="region of interest" description="Membrane-anchoring" evidence="2">
    <location>
        <begin position="483"/>
        <end position="516"/>
    </location>
</feature>
<feature type="active site" description="Proton acceptor" evidence="2">
    <location>
        <position position="462"/>
    </location>
</feature>
<feature type="binding site" evidence="2">
    <location>
        <begin position="214"/>
        <end position="223"/>
    </location>
    <ligand>
        <name>FAD</name>
        <dbReference type="ChEBI" id="CHEBI:57692"/>
    </ligand>
</feature>
<feature type="binding site" evidence="2">
    <location>
        <begin position="249"/>
        <end position="251"/>
    </location>
    <ligand>
        <name>FAD</name>
        <dbReference type="ChEBI" id="CHEBI:57692"/>
    </ligand>
</feature>
<feature type="binding site" evidence="2">
    <location>
        <begin position="461"/>
        <end position="463"/>
    </location>
    <ligand>
        <name>substrate</name>
    </ligand>
</feature>
<feature type="binding site" evidence="2">
    <location>
        <begin position="464"/>
        <end position="466"/>
    </location>
    <ligand>
        <name>FAD</name>
        <dbReference type="ChEBI" id="CHEBI:57692"/>
    </ligand>
</feature>
<feature type="binding site" evidence="2">
    <location>
        <position position="562"/>
    </location>
    <ligand>
        <name>FAD</name>
        <dbReference type="ChEBI" id="CHEBI:57692"/>
    </ligand>
</feature>
<feature type="modified residue" description="N6-acetyllysine" evidence="3">
    <location>
        <position position="51"/>
    </location>
</feature>
<feature type="modified residue" description="N6-acetyllysine; alternate" evidence="3">
    <location>
        <position position="71"/>
    </location>
</feature>
<feature type="modified residue" description="N6-succinyllysine; alternate" evidence="3">
    <location>
        <position position="71"/>
    </location>
</feature>
<feature type="modified residue" description="N6-succinyllysine" evidence="3">
    <location>
        <position position="195"/>
    </location>
</feature>
<feature type="modified residue" description="S-nitrosocysteine" evidence="3">
    <location>
        <position position="237"/>
    </location>
</feature>
<feature type="modified residue" description="N6-acetyllysine; alternate" evidence="2">
    <location>
        <position position="239"/>
    </location>
</feature>
<feature type="modified residue" description="N6-succinyllysine; alternate" evidence="3">
    <location>
        <position position="239"/>
    </location>
</feature>
<feature type="modified residue" description="N6-acetyllysine; alternate" evidence="3">
    <location>
        <position position="276"/>
    </location>
</feature>
<feature type="modified residue" description="N6-succinyllysine; alternate" evidence="3">
    <location>
        <position position="276"/>
    </location>
</feature>
<feature type="modified residue" description="N6-acetyllysine; alternate" evidence="3">
    <location>
        <position position="278"/>
    </location>
</feature>
<feature type="modified residue" description="N6-succinyllysine; alternate" evidence="3">
    <location>
        <position position="278"/>
    </location>
</feature>
<feature type="modified residue" description="N6-acetyllysine" evidence="3">
    <location>
        <position position="298"/>
    </location>
</feature>
<feature type="modified residue" description="N6-acetyllysine; alternate" evidence="2">
    <location>
        <position position="331"/>
    </location>
</feature>
<feature type="modified residue" description="N6-succinyllysine; alternate" evidence="3">
    <location>
        <position position="331"/>
    </location>
</feature>
<feature type="modified residue" description="N6-succinyllysine" evidence="3">
    <location>
        <position position="372"/>
    </location>
</feature>
<feature type="modified residue" description="N6-acetyllysine; alternate" evidence="3">
    <location>
        <position position="482"/>
    </location>
</feature>
<feature type="modified residue" description="N6-succinyllysine; alternate" evidence="3">
    <location>
        <position position="482"/>
    </location>
</feature>
<feature type="modified residue" description="Phosphoserine" evidence="2">
    <location>
        <position position="517"/>
    </location>
</feature>
<feature type="modified residue" description="Phosphoserine" evidence="2">
    <location>
        <position position="522"/>
    </location>
</feature>
<feature type="modified residue" description="N6-acetyllysine" evidence="3">
    <location>
        <position position="550"/>
    </location>
</feature>
<feature type="modified residue" description="N6-acetyllysine; alternate" evidence="3">
    <location>
        <position position="556"/>
    </location>
</feature>
<feature type="modified residue" description="N6-succinyllysine; alternate" evidence="3">
    <location>
        <position position="556"/>
    </location>
</feature>
<feature type="modified residue" description="N6-succinyllysine" evidence="3">
    <location>
        <position position="639"/>
    </location>
</feature>